<organism>
    <name type="scientific">Geobacillus kaustophilus (strain HTA426)</name>
    <dbReference type="NCBI Taxonomy" id="235909"/>
    <lineage>
        <taxon>Bacteria</taxon>
        <taxon>Bacillati</taxon>
        <taxon>Bacillota</taxon>
        <taxon>Bacilli</taxon>
        <taxon>Bacillales</taxon>
        <taxon>Anoxybacillaceae</taxon>
        <taxon>Geobacillus</taxon>
        <taxon>Geobacillus thermoleovorans group</taxon>
    </lineage>
</organism>
<accession>Q5L0P0</accession>
<sequence length="260" mass="29262">MKRYTVKDIEALLPKLGADDPRWEMLRQDERKSVQALLARFERQKARRHAIEQRWEELMRYERELYAAGVRRIAGIDEAGRGPLAGPVVAAAVILPKDAYLPGLDDSKRLTPEKREALFAQIEACAVAIGIGIVSAAEIDERNIYEATRQAMAKAVNALSPPPEHLLVDAMAVPCPLPQQRLIKGDANSASIAAASVIAKVTRDRWMKELDRRYPQYGFARHMGYGTPEHFEAIRRYGVTPEHRRSFAPVREVLKASEQL</sequence>
<proteinExistence type="inferred from homology"/>
<name>RNH2_GEOKA</name>
<comment type="function">
    <text evidence="1">Endonuclease that specifically degrades the RNA of RNA-DNA hybrids.</text>
</comment>
<comment type="catalytic activity">
    <reaction evidence="1">
        <text>Endonucleolytic cleavage to 5'-phosphomonoester.</text>
        <dbReference type="EC" id="3.1.26.4"/>
    </reaction>
</comment>
<comment type="cofactor">
    <cofactor evidence="1">
        <name>Mn(2+)</name>
        <dbReference type="ChEBI" id="CHEBI:29035"/>
    </cofactor>
    <cofactor evidence="1">
        <name>Mg(2+)</name>
        <dbReference type="ChEBI" id="CHEBI:18420"/>
    </cofactor>
    <text evidence="1">Manganese or magnesium. Binds 1 divalent metal ion per monomer in the absence of substrate. May bind a second metal ion after substrate binding.</text>
</comment>
<comment type="subcellular location">
    <subcellularLocation>
        <location evidence="1">Cytoplasm</location>
    </subcellularLocation>
</comment>
<comment type="similarity">
    <text evidence="1">Belongs to the RNase HII family.</text>
</comment>
<feature type="chain" id="PRO_0000235725" description="Ribonuclease HII">
    <location>
        <begin position="1"/>
        <end position="260"/>
    </location>
</feature>
<feature type="domain" description="RNase H type-2" evidence="2">
    <location>
        <begin position="71"/>
        <end position="259"/>
    </location>
</feature>
<feature type="binding site" evidence="1">
    <location>
        <position position="77"/>
    </location>
    <ligand>
        <name>a divalent metal cation</name>
        <dbReference type="ChEBI" id="CHEBI:60240"/>
    </ligand>
</feature>
<feature type="binding site" evidence="1">
    <location>
        <position position="78"/>
    </location>
    <ligand>
        <name>a divalent metal cation</name>
        <dbReference type="ChEBI" id="CHEBI:60240"/>
    </ligand>
</feature>
<feature type="binding site" evidence="1">
    <location>
        <position position="169"/>
    </location>
    <ligand>
        <name>a divalent metal cation</name>
        <dbReference type="ChEBI" id="CHEBI:60240"/>
    </ligand>
</feature>
<keyword id="KW-0963">Cytoplasm</keyword>
<keyword id="KW-0255">Endonuclease</keyword>
<keyword id="KW-0378">Hydrolase</keyword>
<keyword id="KW-0464">Manganese</keyword>
<keyword id="KW-0479">Metal-binding</keyword>
<keyword id="KW-0540">Nuclease</keyword>
<keyword id="KW-1185">Reference proteome</keyword>
<dbReference type="EC" id="3.1.26.4" evidence="1"/>
<dbReference type="EMBL" id="BA000043">
    <property type="protein sequence ID" value="BAD75490.1"/>
    <property type="molecule type" value="Genomic_DNA"/>
</dbReference>
<dbReference type="RefSeq" id="WP_011230705.1">
    <property type="nucleotide sequence ID" value="NC_006510.1"/>
</dbReference>
<dbReference type="SMR" id="Q5L0P0"/>
<dbReference type="STRING" id="235909.GK1205"/>
<dbReference type="KEGG" id="gka:GK1205"/>
<dbReference type="eggNOG" id="COG0164">
    <property type="taxonomic scope" value="Bacteria"/>
</dbReference>
<dbReference type="HOGENOM" id="CLU_036532_2_1_9"/>
<dbReference type="Proteomes" id="UP000001172">
    <property type="component" value="Chromosome"/>
</dbReference>
<dbReference type="GO" id="GO:0005737">
    <property type="term" value="C:cytoplasm"/>
    <property type="evidence" value="ECO:0007669"/>
    <property type="project" value="UniProtKB-SubCell"/>
</dbReference>
<dbReference type="GO" id="GO:0032299">
    <property type="term" value="C:ribonuclease H2 complex"/>
    <property type="evidence" value="ECO:0007669"/>
    <property type="project" value="TreeGrafter"/>
</dbReference>
<dbReference type="GO" id="GO:0030145">
    <property type="term" value="F:manganese ion binding"/>
    <property type="evidence" value="ECO:0007669"/>
    <property type="project" value="UniProtKB-UniRule"/>
</dbReference>
<dbReference type="GO" id="GO:0003723">
    <property type="term" value="F:RNA binding"/>
    <property type="evidence" value="ECO:0007669"/>
    <property type="project" value="InterPro"/>
</dbReference>
<dbReference type="GO" id="GO:0004523">
    <property type="term" value="F:RNA-DNA hybrid ribonuclease activity"/>
    <property type="evidence" value="ECO:0007669"/>
    <property type="project" value="UniProtKB-UniRule"/>
</dbReference>
<dbReference type="GO" id="GO:0043137">
    <property type="term" value="P:DNA replication, removal of RNA primer"/>
    <property type="evidence" value="ECO:0007669"/>
    <property type="project" value="TreeGrafter"/>
</dbReference>
<dbReference type="GO" id="GO:0006298">
    <property type="term" value="P:mismatch repair"/>
    <property type="evidence" value="ECO:0007669"/>
    <property type="project" value="TreeGrafter"/>
</dbReference>
<dbReference type="CDD" id="cd07182">
    <property type="entry name" value="RNase_HII_bacteria_HII_like"/>
    <property type="match status" value="1"/>
</dbReference>
<dbReference type="FunFam" id="3.30.420.10:FF:000006">
    <property type="entry name" value="Ribonuclease HII"/>
    <property type="match status" value="1"/>
</dbReference>
<dbReference type="Gene3D" id="3.30.420.10">
    <property type="entry name" value="Ribonuclease H-like superfamily/Ribonuclease H"/>
    <property type="match status" value="1"/>
</dbReference>
<dbReference type="HAMAP" id="MF_00052_B">
    <property type="entry name" value="RNase_HII_B"/>
    <property type="match status" value="1"/>
</dbReference>
<dbReference type="InterPro" id="IPR022898">
    <property type="entry name" value="RNase_HII"/>
</dbReference>
<dbReference type="InterPro" id="IPR001352">
    <property type="entry name" value="RNase_HII/HIII"/>
</dbReference>
<dbReference type="InterPro" id="IPR024567">
    <property type="entry name" value="RNase_HII/HIII_dom"/>
</dbReference>
<dbReference type="InterPro" id="IPR012337">
    <property type="entry name" value="RNaseH-like_sf"/>
</dbReference>
<dbReference type="InterPro" id="IPR036397">
    <property type="entry name" value="RNaseH_sf"/>
</dbReference>
<dbReference type="NCBIfam" id="NF000594">
    <property type="entry name" value="PRK00015.1-1"/>
    <property type="match status" value="1"/>
</dbReference>
<dbReference type="NCBIfam" id="NF000595">
    <property type="entry name" value="PRK00015.1-3"/>
    <property type="match status" value="1"/>
</dbReference>
<dbReference type="PANTHER" id="PTHR10954">
    <property type="entry name" value="RIBONUCLEASE H2 SUBUNIT A"/>
    <property type="match status" value="1"/>
</dbReference>
<dbReference type="PANTHER" id="PTHR10954:SF18">
    <property type="entry name" value="RIBONUCLEASE HII"/>
    <property type="match status" value="1"/>
</dbReference>
<dbReference type="Pfam" id="PF01351">
    <property type="entry name" value="RNase_HII"/>
    <property type="match status" value="1"/>
</dbReference>
<dbReference type="SUPFAM" id="SSF53098">
    <property type="entry name" value="Ribonuclease H-like"/>
    <property type="match status" value="1"/>
</dbReference>
<dbReference type="PROSITE" id="PS51975">
    <property type="entry name" value="RNASE_H_2"/>
    <property type="match status" value="1"/>
</dbReference>
<protein>
    <recommendedName>
        <fullName evidence="1">Ribonuclease HII</fullName>
        <shortName evidence="1">RNase HII</shortName>
        <ecNumber evidence="1">3.1.26.4</ecNumber>
    </recommendedName>
</protein>
<reference key="1">
    <citation type="journal article" date="2004" name="Nucleic Acids Res.">
        <title>Thermoadaptation trait revealed by the genome sequence of thermophilic Geobacillus kaustophilus.</title>
        <authorList>
            <person name="Takami H."/>
            <person name="Takaki Y."/>
            <person name="Chee G.-J."/>
            <person name="Nishi S."/>
            <person name="Shimamura S."/>
            <person name="Suzuki H."/>
            <person name="Matsui S."/>
            <person name="Uchiyama I."/>
        </authorList>
    </citation>
    <scope>NUCLEOTIDE SEQUENCE [LARGE SCALE GENOMIC DNA]</scope>
    <source>
        <strain>HTA426</strain>
    </source>
</reference>
<gene>
    <name evidence="1" type="primary">rnhB</name>
    <name type="ordered locus">GK1205</name>
</gene>
<evidence type="ECO:0000255" key="1">
    <source>
        <dbReference type="HAMAP-Rule" id="MF_00052"/>
    </source>
</evidence>
<evidence type="ECO:0000255" key="2">
    <source>
        <dbReference type="PROSITE-ProRule" id="PRU01319"/>
    </source>
</evidence>